<protein>
    <recommendedName>
        <fullName evidence="1">Flagellar L-ring protein</fullName>
    </recommendedName>
    <alternativeName>
        <fullName evidence="1">Basal body L-ring protein</fullName>
    </alternativeName>
</protein>
<feature type="signal peptide" evidence="1">
    <location>
        <begin position="1"/>
        <end position="15"/>
    </location>
</feature>
<feature type="chain" id="PRO_0000236843" description="Flagellar L-ring protein">
    <location>
        <begin position="16"/>
        <end position="230"/>
    </location>
</feature>
<feature type="lipid moiety-binding region" description="N-palmitoyl cysteine" evidence="1">
    <location>
        <position position="16"/>
    </location>
</feature>
<feature type="lipid moiety-binding region" description="S-diacylglycerol cysteine" evidence="1">
    <location>
        <position position="16"/>
    </location>
</feature>
<dbReference type="EMBL" id="AM039952">
    <property type="protein sequence ID" value="CAJ23704.1"/>
    <property type="molecule type" value="Genomic_DNA"/>
</dbReference>
<dbReference type="RefSeq" id="WP_005914445.1">
    <property type="nucleotide sequence ID" value="NZ_CP017190.1"/>
</dbReference>
<dbReference type="SMR" id="Q3BU05"/>
<dbReference type="STRING" id="456327.BJD11_12290"/>
<dbReference type="GeneID" id="63991250"/>
<dbReference type="KEGG" id="xcv:XCV2027"/>
<dbReference type="eggNOG" id="COG2063">
    <property type="taxonomic scope" value="Bacteria"/>
</dbReference>
<dbReference type="HOGENOM" id="CLU_069313_0_1_6"/>
<dbReference type="Proteomes" id="UP000007069">
    <property type="component" value="Chromosome"/>
</dbReference>
<dbReference type="GO" id="GO:0009427">
    <property type="term" value="C:bacterial-type flagellum basal body, distal rod, L ring"/>
    <property type="evidence" value="ECO:0007669"/>
    <property type="project" value="InterPro"/>
</dbReference>
<dbReference type="GO" id="GO:0009279">
    <property type="term" value="C:cell outer membrane"/>
    <property type="evidence" value="ECO:0007669"/>
    <property type="project" value="UniProtKB-SubCell"/>
</dbReference>
<dbReference type="GO" id="GO:0003774">
    <property type="term" value="F:cytoskeletal motor activity"/>
    <property type="evidence" value="ECO:0007669"/>
    <property type="project" value="InterPro"/>
</dbReference>
<dbReference type="GO" id="GO:0071973">
    <property type="term" value="P:bacterial-type flagellum-dependent cell motility"/>
    <property type="evidence" value="ECO:0007669"/>
    <property type="project" value="InterPro"/>
</dbReference>
<dbReference type="HAMAP" id="MF_00415">
    <property type="entry name" value="FlgH"/>
    <property type="match status" value="1"/>
</dbReference>
<dbReference type="InterPro" id="IPR000527">
    <property type="entry name" value="Flag_Lring"/>
</dbReference>
<dbReference type="NCBIfam" id="NF001304">
    <property type="entry name" value="PRK00249.1-4"/>
    <property type="match status" value="1"/>
</dbReference>
<dbReference type="PANTHER" id="PTHR34933">
    <property type="entry name" value="FLAGELLAR L-RING PROTEIN"/>
    <property type="match status" value="1"/>
</dbReference>
<dbReference type="PANTHER" id="PTHR34933:SF1">
    <property type="entry name" value="FLAGELLAR L-RING PROTEIN"/>
    <property type="match status" value="1"/>
</dbReference>
<dbReference type="Pfam" id="PF02107">
    <property type="entry name" value="FlgH"/>
    <property type="match status" value="1"/>
</dbReference>
<dbReference type="PRINTS" id="PR01008">
    <property type="entry name" value="FLGLRINGFLGH"/>
</dbReference>
<dbReference type="PROSITE" id="PS51257">
    <property type="entry name" value="PROKAR_LIPOPROTEIN"/>
    <property type="match status" value="1"/>
</dbReference>
<reference key="1">
    <citation type="journal article" date="2005" name="J. Bacteriol.">
        <title>Insights into genome plasticity and pathogenicity of the plant pathogenic Bacterium Xanthomonas campestris pv. vesicatoria revealed by the complete genome sequence.</title>
        <authorList>
            <person name="Thieme F."/>
            <person name="Koebnik R."/>
            <person name="Bekel T."/>
            <person name="Berger C."/>
            <person name="Boch J."/>
            <person name="Buettner D."/>
            <person name="Caldana C."/>
            <person name="Gaigalat L."/>
            <person name="Goesmann A."/>
            <person name="Kay S."/>
            <person name="Kirchner O."/>
            <person name="Lanz C."/>
            <person name="Linke B."/>
            <person name="McHardy A.C."/>
            <person name="Meyer F."/>
            <person name="Mittenhuber G."/>
            <person name="Nies D.H."/>
            <person name="Niesbach-Kloesgen U."/>
            <person name="Patschkowski T."/>
            <person name="Rueckert C."/>
            <person name="Rupp O."/>
            <person name="Schneiker S."/>
            <person name="Schuster S.C."/>
            <person name="Vorhoelter F.J."/>
            <person name="Weber E."/>
            <person name="Puehler A."/>
            <person name="Bonas U."/>
            <person name="Bartels D."/>
            <person name="Kaiser O."/>
        </authorList>
    </citation>
    <scope>NUCLEOTIDE SEQUENCE [LARGE SCALE GENOMIC DNA]</scope>
    <source>
        <strain>85-10</strain>
    </source>
</reference>
<proteinExistence type="inferred from homology"/>
<evidence type="ECO:0000255" key="1">
    <source>
        <dbReference type="HAMAP-Rule" id="MF_00415"/>
    </source>
</evidence>
<sequence>MSRLPSLSRLCLAIACSALLGGCVAAGDVRPFAELAPIVPVVAPVAQPTAGAIYAAGPSLNLYGDRRARDVGDLLTVNLVESTTASSTANTSISKKDATTMGAPTLLGAPLTVGGLNVLENSTSGDRSFAGKGNTAQSNRMQGSVTVTVMQRLPNGNLVIQGQKNLRLTQGDELVQVQGIVRAADIAPDNTVPSSKVADARIAYGGRGAIAQSNAMGWLSRFFNSRLSPY</sequence>
<organism>
    <name type="scientific">Xanthomonas euvesicatoria pv. vesicatoria (strain 85-10)</name>
    <name type="common">Xanthomonas campestris pv. vesicatoria</name>
    <dbReference type="NCBI Taxonomy" id="316273"/>
    <lineage>
        <taxon>Bacteria</taxon>
        <taxon>Pseudomonadati</taxon>
        <taxon>Pseudomonadota</taxon>
        <taxon>Gammaproteobacteria</taxon>
        <taxon>Lysobacterales</taxon>
        <taxon>Lysobacteraceae</taxon>
        <taxon>Xanthomonas</taxon>
    </lineage>
</organism>
<gene>
    <name evidence="1" type="primary">flgH</name>
    <name type="ordered locus">XCV2027</name>
</gene>
<accession>Q3BU05</accession>
<keyword id="KW-0975">Bacterial flagellum</keyword>
<keyword id="KW-0998">Cell outer membrane</keyword>
<keyword id="KW-0449">Lipoprotein</keyword>
<keyword id="KW-0472">Membrane</keyword>
<keyword id="KW-0564">Palmitate</keyword>
<keyword id="KW-0732">Signal</keyword>
<name>FLGH_XANE5</name>
<comment type="function">
    <text evidence="1">Assembles around the rod to form the L-ring and probably protects the motor/basal body from shearing forces during rotation.</text>
</comment>
<comment type="subunit">
    <text evidence="1">The basal body constitutes a major portion of the flagellar organelle and consists of four rings (L,P,S, and M) mounted on a central rod.</text>
</comment>
<comment type="subcellular location">
    <subcellularLocation>
        <location evidence="1">Cell outer membrane</location>
        <topology evidence="1">Lipid-anchor</topology>
    </subcellularLocation>
    <subcellularLocation>
        <location evidence="1">Bacterial flagellum basal body</location>
    </subcellularLocation>
</comment>
<comment type="similarity">
    <text evidence="1">Belongs to the FlgH family.</text>
</comment>